<sequence>MLIQAVTIFPEMFDSITRYGVTGRANRQGIWQFEAVNPRKFADNRLGYIDDRPFGGGPGMIMMAPPLHAAIEHAKTQSSQAAKVIYLSPQGKPLTHQKAVELAELPHLILLCGRYEGIDERLLQSSVDEEISIGDFVVSGGELPAMMLMDAVLRLVPGVLGDMQSAEQDSFSSGILDCPHYTKPLEFQGMAVPEVLRSGNHGLIAEWRLEQSLRRTLERRPDLLEKRVLIPKESRLLETIRQEQREIQS</sequence>
<proteinExistence type="inferred from homology"/>
<gene>
    <name type="primary">trmD</name>
    <name type="ordered locus">NMB0590</name>
</gene>
<keyword id="KW-0963">Cytoplasm</keyword>
<keyword id="KW-0489">Methyltransferase</keyword>
<keyword id="KW-1185">Reference proteome</keyword>
<keyword id="KW-0949">S-adenosyl-L-methionine</keyword>
<keyword id="KW-0808">Transferase</keyword>
<keyword id="KW-0819">tRNA processing</keyword>
<dbReference type="EC" id="2.1.1.228"/>
<dbReference type="EMBL" id="AE002098">
    <property type="protein sequence ID" value="AAF41018.1"/>
    <property type="molecule type" value="Genomic_DNA"/>
</dbReference>
<dbReference type="PIR" id="C81180">
    <property type="entry name" value="C81180"/>
</dbReference>
<dbReference type="RefSeq" id="NP_273634.1">
    <property type="nucleotide sequence ID" value="NC_003112.2"/>
</dbReference>
<dbReference type="RefSeq" id="WP_002222855.1">
    <property type="nucleotide sequence ID" value="NC_003112.2"/>
</dbReference>
<dbReference type="SMR" id="Q9K0K4"/>
<dbReference type="FunCoup" id="Q9K0K4">
    <property type="interactions" value="479"/>
</dbReference>
<dbReference type="STRING" id="122586.NMB0590"/>
<dbReference type="PaxDb" id="122586-NMB0590"/>
<dbReference type="KEGG" id="nme:NMB0590"/>
<dbReference type="PATRIC" id="fig|122586.8.peg.752"/>
<dbReference type="HOGENOM" id="CLU_047363_0_1_4"/>
<dbReference type="InParanoid" id="Q9K0K4"/>
<dbReference type="OrthoDB" id="9807416at2"/>
<dbReference type="Proteomes" id="UP000000425">
    <property type="component" value="Chromosome"/>
</dbReference>
<dbReference type="GO" id="GO:0005829">
    <property type="term" value="C:cytosol"/>
    <property type="evidence" value="ECO:0000318"/>
    <property type="project" value="GO_Central"/>
</dbReference>
<dbReference type="GO" id="GO:0052906">
    <property type="term" value="F:tRNA (guanine(37)-N1)-methyltransferase activity"/>
    <property type="evidence" value="ECO:0000318"/>
    <property type="project" value="GO_Central"/>
</dbReference>
<dbReference type="GO" id="GO:0002939">
    <property type="term" value="P:tRNA N1-guanine methylation"/>
    <property type="evidence" value="ECO:0000318"/>
    <property type="project" value="GO_Central"/>
</dbReference>
<dbReference type="CDD" id="cd18080">
    <property type="entry name" value="TrmD-like"/>
    <property type="match status" value="1"/>
</dbReference>
<dbReference type="FunFam" id="1.10.1270.20:FF:000001">
    <property type="entry name" value="tRNA (guanine-N(1)-)-methyltransferase"/>
    <property type="match status" value="1"/>
</dbReference>
<dbReference type="FunFam" id="3.40.1280.10:FF:000001">
    <property type="entry name" value="tRNA (guanine-N(1)-)-methyltransferase"/>
    <property type="match status" value="1"/>
</dbReference>
<dbReference type="Gene3D" id="3.40.1280.10">
    <property type="match status" value="1"/>
</dbReference>
<dbReference type="Gene3D" id="1.10.1270.20">
    <property type="entry name" value="tRNA(m1g37)methyltransferase, domain 2"/>
    <property type="match status" value="1"/>
</dbReference>
<dbReference type="HAMAP" id="MF_00605">
    <property type="entry name" value="TrmD"/>
    <property type="match status" value="1"/>
</dbReference>
<dbReference type="InterPro" id="IPR029028">
    <property type="entry name" value="Alpha/beta_knot_MTases"/>
</dbReference>
<dbReference type="InterPro" id="IPR023148">
    <property type="entry name" value="tRNA_m1G_MeTrfase_C_sf"/>
</dbReference>
<dbReference type="InterPro" id="IPR002649">
    <property type="entry name" value="tRNA_m1G_MeTrfase_TrmD"/>
</dbReference>
<dbReference type="InterPro" id="IPR029026">
    <property type="entry name" value="tRNA_m1G_MTases_N"/>
</dbReference>
<dbReference type="InterPro" id="IPR016009">
    <property type="entry name" value="tRNA_MeTrfase_TRMD/TRM10"/>
</dbReference>
<dbReference type="NCBIfam" id="NF000648">
    <property type="entry name" value="PRK00026.1"/>
    <property type="match status" value="1"/>
</dbReference>
<dbReference type="NCBIfam" id="TIGR00088">
    <property type="entry name" value="trmD"/>
    <property type="match status" value="1"/>
</dbReference>
<dbReference type="PANTHER" id="PTHR46417">
    <property type="entry name" value="TRNA (GUANINE-N(1)-)-METHYLTRANSFERASE"/>
    <property type="match status" value="1"/>
</dbReference>
<dbReference type="PANTHER" id="PTHR46417:SF1">
    <property type="entry name" value="TRNA (GUANINE-N(1)-)-METHYLTRANSFERASE"/>
    <property type="match status" value="1"/>
</dbReference>
<dbReference type="Pfam" id="PF01746">
    <property type="entry name" value="tRNA_m1G_MT"/>
    <property type="match status" value="1"/>
</dbReference>
<dbReference type="PIRSF" id="PIRSF000386">
    <property type="entry name" value="tRNA_mtase"/>
    <property type="match status" value="1"/>
</dbReference>
<dbReference type="SUPFAM" id="SSF75217">
    <property type="entry name" value="alpha/beta knot"/>
    <property type="match status" value="1"/>
</dbReference>
<accession>Q9K0K4</accession>
<evidence type="ECO:0000250" key="1"/>
<evidence type="ECO:0000305" key="2"/>
<organism>
    <name type="scientific">Neisseria meningitidis serogroup B (strain ATCC BAA-335 / MC58)</name>
    <dbReference type="NCBI Taxonomy" id="122586"/>
    <lineage>
        <taxon>Bacteria</taxon>
        <taxon>Pseudomonadati</taxon>
        <taxon>Pseudomonadota</taxon>
        <taxon>Betaproteobacteria</taxon>
        <taxon>Neisseriales</taxon>
        <taxon>Neisseriaceae</taxon>
        <taxon>Neisseria</taxon>
    </lineage>
</organism>
<name>TRMD_NEIMB</name>
<feature type="chain" id="PRO_0000060421" description="tRNA (guanine-N(1)-)-methyltransferase">
    <location>
        <begin position="1"/>
        <end position="249"/>
    </location>
</feature>
<feature type="binding site" evidence="1">
    <location>
        <position position="113"/>
    </location>
    <ligand>
        <name>S-adenosyl-L-methionine</name>
        <dbReference type="ChEBI" id="CHEBI:59789"/>
    </ligand>
</feature>
<feature type="binding site" evidence="1">
    <location>
        <begin position="133"/>
        <end position="138"/>
    </location>
    <ligand>
        <name>S-adenosyl-L-methionine</name>
        <dbReference type="ChEBI" id="CHEBI:59789"/>
    </ligand>
</feature>
<protein>
    <recommendedName>
        <fullName>tRNA (guanine-N(1)-)-methyltransferase</fullName>
        <ecNumber>2.1.1.228</ecNumber>
    </recommendedName>
    <alternativeName>
        <fullName>M1G-methyltransferase</fullName>
    </alternativeName>
    <alternativeName>
        <fullName>tRNA [GM37] methyltransferase</fullName>
    </alternativeName>
</protein>
<comment type="function">
    <text evidence="1">Specifically methylates guanosine-37 in various tRNAs.</text>
</comment>
<comment type="catalytic activity">
    <reaction>
        <text>guanosine(37) in tRNA + S-adenosyl-L-methionine = N(1)-methylguanosine(37) in tRNA + S-adenosyl-L-homocysteine + H(+)</text>
        <dbReference type="Rhea" id="RHEA:36899"/>
        <dbReference type="Rhea" id="RHEA-COMP:10145"/>
        <dbReference type="Rhea" id="RHEA-COMP:10147"/>
        <dbReference type="ChEBI" id="CHEBI:15378"/>
        <dbReference type="ChEBI" id="CHEBI:57856"/>
        <dbReference type="ChEBI" id="CHEBI:59789"/>
        <dbReference type="ChEBI" id="CHEBI:73542"/>
        <dbReference type="ChEBI" id="CHEBI:74269"/>
        <dbReference type="EC" id="2.1.1.228"/>
    </reaction>
</comment>
<comment type="subunit">
    <text evidence="1">Homodimer.</text>
</comment>
<comment type="subcellular location">
    <subcellularLocation>
        <location evidence="2">Cytoplasm</location>
    </subcellularLocation>
</comment>
<comment type="similarity">
    <text evidence="2">Belongs to the RNA methyltransferase TrmD family.</text>
</comment>
<reference key="1">
    <citation type="journal article" date="2000" name="Science">
        <title>Complete genome sequence of Neisseria meningitidis serogroup B strain MC58.</title>
        <authorList>
            <person name="Tettelin H."/>
            <person name="Saunders N.J."/>
            <person name="Heidelberg J.F."/>
            <person name="Jeffries A.C."/>
            <person name="Nelson K.E."/>
            <person name="Eisen J.A."/>
            <person name="Ketchum K.A."/>
            <person name="Hood D.W."/>
            <person name="Peden J.F."/>
            <person name="Dodson R.J."/>
            <person name="Nelson W.C."/>
            <person name="Gwinn M.L."/>
            <person name="DeBoy R.T."/>
            <person name="Peterson J.D."/>
            <person name="Hickey E.K."/>
            <person name="Haft D.H."/>
            <person name="Salzberg S.L."/>
            <person name="White O."/>
            <person name="Fleischmann R.D."/>
            <person name="Dougherty B.A."/>
            <person name="Mason T.M."/>
            <person name="Ciecko A."/>
            <person name="Parksey D.S."/>
            <person name="Blair E."/>
            <person name="Cittone H."/>
            <person name="Clark E.B."/>
            <person name="Cotton M.D."/>
            <person name="Utterback T.R."/>
            <person name="Khouri H.M."/>
            <person name="Qin H."/>
            <person name="Vamathevan J.J."/>
            <person name="Gill J."/>
            <person name="Scarlato V."/>
            <person name="Masignani V."/>
            <person name="Pizza M."/>
            <person name="Grandi G."/>
            <person name="Sun L."/>
            <person name="Smith H.O."/>
            <person name="Fraser C.M."/>
            <person name="Moxon E.R."/>
            <person name="Rappuoli R."/>
            <person name="Venter J.C."/>
        </authorList>
    </citation>
    <scope>NUCLEOTIDE SEQUENCE [LARGE SCALE GENOMIC DNA]</scope>
    <source>
        <strain>ATCC BAA-335 / MC58</strain>
    </source>
</reference>